<gene>
    <name evidence="1" type="primary">rpmH</name>
    <name type="ordered locus">Krad_4513</name>
</gene>
<keyword id="KW-1185">Reference proteome</keyword>
<keyword id="KW-0687">Ribonucleoprotein</keyword>
<keyword id="KW-0689">Ribosomal protein</keyword>
<accession>A6WGN3</accession>
<proteinExistence type="inferred from homology"/>
<reference key="1">
    <citation type="journal article" date="2008" name="PLoS ONE">
        <title>Survival in nuclear waste, extreme resistance, and potential applications gleaned from the genome sequence of Kineococcus radiotolerans SRS30216.</title>
        <authorList>
            <person name="Bagwell C.E."/>
            <person name="Bhat S."/>
            <person name="Hawkins G.M."/>
            <person name="Smith B.W."/>
            <person name="Biswas T."/>
            <person name="Hoover T.R."/>
            <person name="Saunders E."/>
            <person name="Han C.S."/>
            <person name="Tsodikov O.V."/>
            <person name="Shimkets L.J."/>
        </authorList>
    </citation>
    <scope>NUCLEOTIDE SEQUENCE [LARGE SCALE GENOMIC DNA]</scope>
    <source>
        <strain>ATCC BAA-149 / DSM 14245 / SRS30216</strain>
    </source>
</reference>
<protein>
    <recommendedName>
        <fullName evidence="1">Large ribosomal subunit protein bL34</fullName>
    </recommendedName>
    <alternativeName>
        <fullName evidence="2">50S ribosomal protein L34</fullName>
    </alternativeName>
</protein>
<comment type="similarity">
    <text evidence="1">Belongs to the bacterial ribosomal protein bL34 family.</text>
</comment>
<evidence type="ECO:0000255" key="1">
    <source>
        <dbReference type="HAMAP-Rule" id="MF_00391"/>
    </source>
</evidence>
<evidence type="ECO:0000305" key="2"/>
<sequence>MSKRTFQPNNRRRAKVHGFRLRMRTRAGRAILSARRTKGRAQISA</sequence>
<organism>
    <name type="scientific">Kineococcus radiotolerans (strain ATCC BAA-149 / DSM 14245 / SRS30216)</name>
    <dbReference type="NCBI Taxonomy" id="266940"/>
    <lineage>
        <taxon>Bacteria</taxon>
        <taxon>Bacillati</taxon>
        <taxon>Actinomycetota</taxon>
        <taxon>Actinomycetes</taxon>
        <taxon>Kineosporiales</taxon>
        <taxon>Kineosporiaceae</taxon>
        <taxon>Kineococcus</taxon>
    </lineage>
</organism>
<name>RL34_KINRD</name>
<dbReference type="EMBL" id="CP000750">
    <property type="protein sequence ID" value="ABS05972.1"/>
    <property type="molecule type" value="Genomic_DNA"/>
</dbReference>
<dbReference type="RefSeq" id="WP_012085693.1">
    <property type="nucleotide sequence ID" value="NC_009664.2"/>
</dbReference>
<dbReference type="SMR" id="A6WGN3"/>
<dbReference type="STRING" id="266940.Krad_4513"/>
<dbReference type="KEGG" id="kra:Krad_4513"/>
<dbReference type="eggNOG" id="COG0230">
    <property type="taxonomic scope" value="Bacteria"/>
</dbReference>
<dbReference type="HOGENOM" id="CLU_129938_2_1_11"/>
<dbReference type="OrthoDB" id="9804832at2"/>
<dbReference type="Proteomes" id="UP000001116">
    <property type="component" value="Chromosome"/>
</dbReference>
<dbReference type="GO" id="GO:1990904">
    <property type="term" value="C:ribonucleoprotein complex"/>
    <property type="evidence" value="ECO:0007669"/>
    <property type="project" value="UniProtKB-KW"/>
</dbReference>
<dbReference type="GO" id="GO:0005840">
    <property type="term" value="C:ribosome"/>
    <property type="evidence" value="ECO:0007669"/>
    <property type="project" value="UniProtKB-KW"/>
</dbReference>
<dbReference type="GO" id="GO:0003735">
    <property type="term" value="F:structural constituent of ribosome"/>
    <property type="evidence" value="ECO:0007669"/>
    <property type="project" value="InterPro"/>
</dbReference>
<dbReference type="GO" id="GO:0006412">
    <property type="term" value="P:translation"/>
    <property type="evidence" value="ECO:0007669"/>
    <property type="project" value="UniProtKB-UniRule"/>
</dbReference>
<dbReference type="FunFam" id="1.10.287.3980:FF:000001">
    <property type="entry name" value="Mitochondrial ribosomal protein L34"/>
    <property type="match status" value="1"/>
</dbReference>
<dbReference type="Gene3D" id="1.10.287.3980">
    <property type="match status" value="1"/>
</dbReference>
<dbReference type="HAMAP" id="MF_00391">
    <property type="entry name" value="Ribosomal_bL34"/>
    <property type="match status" value="1"/>
</dbReference>
<dbReference type="InterPro" id="IPR000271">
    <property type="entry name" value="Ribosomal_bL34"/>
</dbReference>
<dbReference type="InterPro" id="IPR020939">
    <property type="entry name" value="Ribosomal_bL34_CS"/>
</dbReference>
<dbReference type="NCBIfam" id="TIGR01030">
    <property type="entry name" value="rpmH_bact"/>
    <property type="match status" value="1"/>
</dbReference>
<dbReference type="PANTHER" id="PTHR14503:SF4">
    <property type="entry name" value="LARGE RIBOSOMAL SUBUNIT PROTEIN BL34M"/>
    <property type="match status" value="1"/>
</dbReference>
<dbReference type="PANTHER" id="PTHR14503">
    <property type="entry name" value="MITOCHONDRIAL RIBOSOMAL PROTEIN 34 FAMILY MEMBER"/>
    <property type="match status" value="1"/>
</dbReference>
<dbReference type="Pfam" id="PF00468">
    <property type="entry name" value="Ribosomal_L34"/>
    <property type="match status" value="1"/>
</dbReference>
<dbReference type="PROSITE" id="PS00784">
    <property type="entry name" value="RIBOSOMAL_L34"/>
    <property type="match status" value="1"/>
</dbReference>
<feature type="chain" id="PRO_1000080254" description="Large ribosomal subunit protein bL34">
    <location>
        <begin position="1"/>
        <end position="45"/>
    </location>
</feature>